<name>INLPD_MYCTU</name>
<protein>
    <recommendedName>
        <fullName evidence="9">(2E)-enoyl-[ACP] glycyltransferase</fullName>
        <ecNumber evidence="1">4.3.2.11</ecNumber>
    </recommendedName>
    <alternativeName>
        <fullName evidence="9">(2E)-unsaturated fatty acyl-[ACP] glycyltransferase</fullName>
    </alternativeName>
    <alternativeName>
        <fullName evidence="7">Long-chain fatty acyl-CoA thioesterase FcoT</fullName>
        <ecNumber evidence="3">3.1.2.-</ecNumber>
    </alternativeName>
    <alternativeName>
        <fullName evidence="8">Palmitoyl-CoA hydrolase</fullName>
        <ecNumber evidence="3">3.1.2.2</ecNumber>
    </alternativeName>
</protein>
<feature type="chain" id="PRO_0000103668" description="(2E)-enoyl-[ACP] glycyltransferase">
    <location>
        <begin position="1"/>
        <end position="183"/>
    </location>
</feature>
<feature type="mutagenesis site" description="Loss of acyl-CoA thioesterase activity." evidence="3">
    <original>Y</original>
    <variation>F</variation>
    <location>
        <position position="33"/>
    </location>
</feature>
<feature type="mutagenesis site" description="Loss of acyl-CoA thioesterase activity." evidence="3">
    <original>Y</original>
    <variation>F</variation>
    <location>
        <position position="66"/>
    </location>
</feature>
<feature type="mutagenesis site" description="Decrease in acyl-CoA thioesterase activity." evidence="3">
    <original>H</original>
    <variation>A</variation>
    <location>
        <position position="72"/>
    </location>
</feature>
<feature type="mutagenesis site" description="Loss of acyl-CoA thioesterase activity." evidence="3">
    <original>N</original>
    <variation>A</variation>
    <location>
        <position position="74"/>
    </location>
</feature>
<feature type="mutagenesis site" description="Decrease in acyl-CoA thioesterase activity." evidence="3">
    <original>E</original>
    <variation>Q</variation>
    <location>
        <position position="77"/>
    </location>
</feature>
<feature type="mutagenesis site" description="Decrease in acyl-CoA thioesterase activity." evidence="3">
    <original>N</original>
    <variation>A</variation>
    <location>
        <position position="83"/>
    </location>
</feature>
<feature type="mutagenesis site" description="Decrease in acyl-CoA thioesterase activity." evidence="3">
    <original>Y</original>
    <variation>F</variation>
    <location>
        <position position="87"/>
    </location>
</feature>
<feature type="helix" evidence="12">
    <location>
        <begin position="25"/>
        <end position="29"/>
    </location>
</feature>
<feature type="helix" evidence="12">
    <location>
        <begin position="31"/>
        <end position="34"/>
    </location>
</feature>
<feature type="turn" evidence="12">
    <location>
        <begin position="35"/>
        <end position="37"/>
    </location>
</feature>
<feature type="strand" evidence="12">
    <location>
        <begin position="41"/>
        <end position="48"/>
    </location>
</feature>
<feature type="strand" evidence="12">
    <location>
        <begin position="53"/>
        <end position="59"/>
    </location>
</feature>
<feature type="strand" evidence="12">
    <location>
        <begin position="65"/>
        <end position="68"/>
    </location>
</feature>
<feature type="helix" evidence="12">
    <location>
        <begin position="75"/>
        <end position="95"/>
    </location>
</feature>
<feature type="helix" evidence="12">
    <location>
        <begin position="100"/>
        <end position="102"/>
    </location>
</feature>
<feature type="helix" evidence="12">
    <location>
        <begin position="107"/>
        <end position="117"/>
    </location>
</feature>
<feature type="strand" evidence="12">
    <location>
        <begin position="118"/>
        <end position="123"/>
    </location>
</feature>
<feature type="strand" evidence="13">
    <location>
        <begin position="125"/>
        <end position="127"/>
    </location>
</feature>
<feature type="strand" evidence="12">
    <location>
        <begin position="135"/>
        <end position="142"/>
    </location>
</feature>
<feature type="strand" evidence="12">
    <location>
        <begin position="146"/>
        <end position="148"/>
    </location>
</feature>
<feature type="strand" evidence="13">
    <location>
        <begin position="150"/>
        <end position="152"/>
    </location>
</feature>
<feature type="strand" evidence="12">
    <location>
        <begin position="154"/>
        <end position="164"/>
    </location>
</feature>
<feature type="strand" evidence="12">
    <location>
        <begin position="170"/>
        <end position="179"/>
    </location>
</feature>
<organism>
    <name type="scientific">Mycobacterium tuberculosis (strain ATCC 25618 / H37Rv)</name>
    <dbReference type="NCBI Taxonomy" id="83332"/>
    <lineage>
        <taxon>Bacteria</taxon>
        <taxon>Bacillati</taxon>
        <taxon>Actinomycetota</taxon>
        <taxon>Actinomycetes</taxon>
        <taxon>Mycobacteriales</taxon>
        <taxon>Mycobacteriaceae</taxon>
        <taxon>Mycobacterium</taxon>
        <taxon>Mycobacterium tuberculosis complex</taxon>
    </lineage>
</organism>
<sequence length="183" mass="20529">MSHTDLTPCTRVLASSGTVPIAEELLARVLEPYSCKGCRYLIDAQYSATEDSVLAYGNFTIGESAYIRSTGHFNAVELILCFNQLAYSAFAPAVLNEEIRVLRGWSIDDYCQHQLSSMLIRKASSRFRKPLNPQKFSARLLCRDLQVIERTWRYLKVPCVIEFWDENGGAASGEIELAALNIP</sequence>
<keyword id="KW-0002">3D-structure</keyword>
<keyword id="KW-0276">Fatty acid metabolism</keyword>
<keyword id="KW-0378">Hydrolase</keyword>
<keyword id="KW-0443">Lipid metabolism</keyword>
<keyword id="KW-0456">Lyase</keyword>
<keyword id="KW-1185">Reference proteome</keyword>
<proteinExistence type="evidence at protein level"/>
<gene>
    <name evidence="7" type="primary">fcoT</name>
    <name type="ordered locus">Rv0098</name>
    <name type="ORF">MTCY251.17</name>
</gene>
<reference key="1">
    <citation type="journal article" date="1998" name="Nature">
        <title>Deciphering the biology of Mycobacterium tuberculosis from the complete genome sequence.</title>
        <authorList>
            <person name="Cole S.T."/>
            <person name="Brosch R."/>
            <person name="Parkhill J."/>
            <person name="Garnier T."/>
            <person name="Churcher C.M."/>
            <person name="Harris D.E."/>
            <person name="Gordon S.V."/>
            <person name="Eiglmeier K."/>
            <person name="Gas S."/>
            <person name="Barry C.E. III"/>
            <person name="Tekaia F."/>
            <person name="Badcock K."/>
            <person name="Basham D."/>
            <person name="Brown D."/>
            <person name="Chillingworth T."/>
            <person name="Connor R."/>
            <person name="Davies R.M."/>
            <person name="Devlin K."/>
            <person name="Feltwell T."/>
            <person name="Gentles S."/>
            <person name="Hamlin N."/>
            <person name="Holroyd S."/>
            <person name="Hornsby T."/>
            <person name="Jagels K."/>
            <person name="Krogh A."/>
            <person name="McLean J."/>
            <person name="Moule S."/>
            <person name="Murphy L.D."/>
            <person name="Oliver S."/>
            <person name="Osborne J."/>
            <person name="Quail M.A."/>
            <person name="Rajandream M.A."/>
            <person name="Rogers J."/>
            <person name="Rutter S."/>
            <person name="Seeger K."/>
            <person name="Skelton S."/>
            <person name="Squares S."/>
            <person name="Squares R."/>
            <person name="Sulston J.E."/>
            <person name="Taylor K."/>
            <person name="Whitehead S."/>
            <person name="Barrell B.G."/>
        </authorList>
    </citation>
    <scope>NUCLEOTIDE SEQUENCE [LARGE SCALE GENOMIC DNA]</scope>
    <source>
        <strain>ATCC 25618 / H37Rv</strain>
    </source>
</reference>
<reference key="2">
    <citation type="journal article" date="2003" name="Proc. Natl. Acad. Sci. U.S.A.">
        <title>Genetic requirements for mycobacterial survival during infection.</title>
        <authorList>
            <person name="Sassetti C.M."/>
            <person name="Rubin E.J."/>
        </authorList>
    </citation>
    <scope>DISRUPTION PHENOTYPE</scope>
    <source>
        <strain>ATCC 25618 / H37Rv</strain>
    </source>
</reference>
<reference key="3">
    <citation type="journal article" date="2009" name="J. Bacteriol.">
        <title>Heterologous expression of mycobacterial proteins in Saccharomyces cerevisiae reveals two physiologically functional 3-hydroxyacyl-thioester dehydratases, HtdX and HtdY, in addition to HadABC and HtdZ.</title>
        <authorList>
            <person name="Gurvitz A."/>
            <person name="Hiltunen J.K."/>
            <person name="Kastaniotis A.J."/>
        </authorList>
    </citation>
    <scope>FUNCTION</scope>
</reference>
<reference key="4">
    <citation type="journal article" date="2011" name="Mol. Cell. Proteomics">
        <title>Proteogenomic analysis of Mycobacterium tuberculosis by high resolution mass spectrometry.</title>
        <authorList>
            <person name="Kelkar D.S."/>
            <person name="Kumar D."/>
            <person name="Kumar P."/>
            <person name="Balakrishnan L."/>
            <person name="Muthusamy B."/>
            <person name="Yadav A.K."/>
            <person name="Shrivastava P."/>
            <person name="Marimuthu A."/>
            <person name="Anand S."/>
            <person name="Sundaram H."/>
            <person name="Kingsbury R."/>
            <person name="Harsha H.C."/>
            <person name="Nair B."/>
            <person name="Prasad T.S."/>
            <person name="Chauhan D.S."/>
            <person name="Katoch K."/>
            <person name="Katoch V.M."/>
            <person name="Kumar P."/>
            <person name="Chaerkady R."/>
            <person name="Ramachandran S."/>
            <person name="Dash D."/>
            <person name="Pandey A."/>
        </authorList>
    </citation>
    <scope>IDENTIFICATION BY MASS SPECTROMETRY [LARGE SCALE ANALYSIS]</scope>
    <source>
        <strain>ATCC 25618 / H37Rv</strain>
    </source>
</reference>
<reference key="5">
    <citation type="journal article" date="2017" name="Proc. Natl. Acad. Sci. U.S.A.">
        <title>Biosynthesis of isonitrile lipopeptides by conserved nonribosomal peptide synthetase gene clusters in Actinobacteria.</title>
        <authorList>
            <person name="Harris N.C."/>
            <person name="Sato M."/>
            <person name="Herman N.A."/>
            <person name="Twigg F."/>
            <person name="Cai W."/>
            <person name="Liu J."/>
            <person name="Zhu X."/>
            <person name="Downey J."/>
            <person name="Khalaf R."/>
            <person name="Martin J."/>
            <person name="Koshino H."/>
            <person name="Zhang W."/>
        </authorList>
    </citation>
    <scope>FUNCTION</scope>
    <source>
        <strain>ATCC 25618 / H37Rv</strain>
    </source>
</reference>
<reference evidence="10" key="6">
    <citation type="journal article" date="2007" name="Chem. Biol.">
        <title>Identification of a type III thioesterase reveals the function of an operon crucial for Mtb virulence.</title>
        <authorList>
            <person name="Wang F."/>
            <person name="Langley R."/>
            <person name="Gulten G."/>
            <person name="Wang L."/>
            <person name="Sacchettini J.C."/>
        </authorList>
    </citation>
    <scope>X-RAY CRYSTALLOGRAPHY (2.30 ANGSTROMS)</scope>
    <scope>FUNCTION</scope>
    <scope>CATALYTIC ACTIVITY</scope>
    <scope>BIOPHYSICOCHEMICAL PROPERTIES</scope>
    <scope>SUBUNIT</scope>
    <scope>MUTAGENESIS OF TYR-33; TYR-66; HIS-72; ASN-74; GLU-77; ASN-83 AND TYR-87</scope>
</reference>
<reference evidence="11" key="7">
    <citation type="journal article" date="2012" name="J. Biomol. Struct. Dyn.">
        <title>Insights into the substrate specificity of a thioesterase Rv0098 of Mycobacterium tuberculosis through X-ray crystallographic and molecular dynamics studies.</title>
        <authorList>
            <person name="Maity K."/>
            <person name="Bajaj P."/>
            <person name="Surolia N."/>
            <person name="Surolia A."/>
            <person name="Suguna K."/>
        </authorList>
    </citation>
    <scope>X-RAY CRYSTALLOGRAPHY (2.75 ANGSTROMS)</scope>
    <scope>SUBUNIT</scope>
</reference>
<comment type="function">
    <text evidence="1 3 4 6">Involved in the biosynthesis of a unique class of isonitrile lipopeptides (INLPs) that seem to function as virulence factors in M.tuberculosis and to play a role in metal acquisition (PubMed:28634299). Catalyzes a Michael addition of glycine to the beta-position of an alpha,beta-unsaturated fatty acyl-[ACP], producing a (3R)-3-[(carboxymethyl)amino]fatty acid. Acts on the (2E)-decenoyl moiety loaded on the acyl-carrier protein (ACP) Rv0100, forming the product (3R)-3-[(carboxymethyl)amino]decanoate released from the ACP (By similarity). Displays thioesterase activity with a preference for long chain fatty acyl groups; in vitro, cleaves the thioester linkage of palmitoyl-CoA, stearoyl-CoA, lauroyl-CoA and hexanoyl-CoA (PubMed:17524985). Contains low levels of trans-enoyl hydratase activity (PubMed:19136596).</text>
</comment>
<comment type="catalytic activity">
    <reaction evidence="1">
        <text>a (3R)-3-[(carboxymethyl)amino]fatty acid + holo-[ACP] + H(+) = a (2E)-enoyl-[ACP] + glycine + H2O</text>
        <dbReference type="Rhea" id="RHEA:74923"/>
        <dbReference type="Rhea" id="RHEA-COMP:9685"/>
        <dbReference type="Rhea" id="RHEA-COMP:9925"/>
        <dbReference type="ChEBI" id="CHEBI:15377"/>
        <dbReference type="ChEBI" id="CHEBI:15378"/>
        <dbReference type="ChEBI" id="CHEBI:57305"/>
        <dbReference type="ChEBI" id="CHEBI:64479"/>
        <dbReference type="ChEBI" id="CHEBI:78784"/>
        <dbReference type="ChEBI" id="CHEBI:193080"/>
        <dbReference type="EC" id="4.3.2.11"/>
    </reaction>
    <physiologicalReaction direction="right-to-left" evidence="1">
        <dbReference type="Rhea" id="RHEA:74925"/>
    </physiologicalReaction>
</comment>
<comment type="catalytic activity">
    <reaction evidence="1">
        <text>(3R)-3-[(carboxylmethyl)amino]decanoate + holo-[ACP] + H(+) = (2E)-decenoyl-[ACP] + glycine + H2O</text>
        <dbReference type="Rhea" id="RHEA:75543"/>
        <dbReference type="Rhea" id="RHEA-COMP:9639"/>
        <dbReference type="Rhea" id="RHEA-COMP:9685"/>
        <dbReference type="ChEBI" id="CHEBI:15377"/>
        <dbReference type="ChEBI" id="CHEBI:15378"/>
        <dbReference type="ChEBI" id="CHEBI:57305"/>
        <dbReference type="ChEBI" id="CHEBI:64479"/>
        <dbReference type="ChEBI" id="CHEBI:78467"/>
        <dbReference type="ChEBI" id="CHEBI:194341"/>
    </reaction>
    <physiologicalReaction direction="right-to-left" evidence="1">
        <dbReference type="Rhea" id="RHEA:75545"/>
    </physiologicalReaction>
</comment>
<comment type="catalytic activity">
    <reaction evidence="3">
        <text>a fatty acyl-CoA + H2O = a fatty acid + CoA + H(+)</text>
        <dbReference type="Rhea" id="RHEA:16781"/>
        <dbReference type="ChEBI" id="CHEBI:15377"/>
        <dbReference type="ChEBI" id="CHEBI:15378"/>
        <dbReference type="ChEBI" id="CHEBI:28868"/>
        <dbReference type="ChEBI" id="CHEBI:57287"/>
        <dbReference type="ChEBI" id="CHEBI:77636"/>
    </reaction>
</comment>
<comment type="catalytic activity">
    <reaction evidence="3">
        <text>hexadecanoyl-CoA + H2O = hexadecanoate + CoA + H(+)</text>
        <dbReference type="Rhea" id="RHEA:16645"/>
        <dbReference type="ChEBI" id="CHEBI:7896"/>
        <dbReference type="ChEBI" id="CHEBI:15377"/>
        <dbReference type="ChEBI" id="CHEBI:15378"/>
        <dbReference type="ChEBI" id="CHEBI:57287"/>
        <dbReference type="ChEBI" id="CHEBI:57379"/>
        <dbReference type="EC" id="3.1.2.2"/>
    </reaction>
</comment>
<comment type="catalytic activity">
    <reaction evidence="3">
        <text>octadecanoyl-CoA + H2O = octadecanoate + CoA + H(+)</text>
        <dbReference type="Rhea" id="RHEA:30139"/>
        <dbReference type="ChEBI" id="CHEBI:15377"/>
        <dbReference type="ChEBI" id="CHEBI:15378"/>
        <dbReference type="ChEBI" id="CHEBI:25629"/>
        <dbReference type="ChEBI" id="CHEBI:57287"/>
        <dbReference type="ChEBI" id="CHEBI:57394"/>
    </reaction>
</comment>
<comment type="catalytic activity">
    <reaction evidence="3">
        <text>dodecanoyl-CoA + H2O = dodecanoate + CoA + H(+)</text>
        <dbReference type="Rhea" id="RHEA:30135"/>
        <dbReference type="ChEBI" id="CHEBI:15377"/>
        <dbReference type="ChEBI" id="CHEBI:15378"/>
        <dbReference type="ChEBI" id="CHEBI:18262"/>
        <dbReference type="ChEBI" id="CHEBI:57287"/>
        <dbReference type="ChEBI" id="CHEBI:57375"/>
    </reaction>
</comment>
<comment type="catalytic activity">
    <reaction evidence="3">
        <text>hexanoyl-CoA + H2O = hexanoate + CoA + H(+)</text>
        <dbReference type="Rhea" id="RHEA:40115"/>
        <dbReference type="ChEBI" id="CHEBI:15377"/>
        <dbReference type="ChEBI" id="CHEBI:15378"/>
        <dbReference type="ChEBI" id="CHEBI:17120"/>
        <dbReference type="ChEBI" id="CHEBI:57287"/>
        <dbReference type="ChEBI" id="CHEBI:62620"/>
    </reaction>
</comment>
<comment type="biophysicochemical properties">
    <kinetics>
        <KM evidence="3">11.87 uM for palmitoyl-CoA</KM>
        <KM evidence="3">10.28 uM for stearoyl-CoA</KM>
        <KM evidence="3">38.52 uM for lauroyl-CoA</KM>
        <KM evidence="3">63.18 uM for hexanoyl-CoA</KM>
        <text evidence="3">kcat is 0.037 sec(-1) with palmitoyl-CoA as substrate. kcat is 0.019 sec(-1) with stearoyl-CoA as substrate. kcat is 0.015 sec(-1) with lauroyl-CoA as substrate. kcat is 0.012 sec(-1) with hexanoyl-CoA as substrate.</text>
    </kinetics>
</comment>
<comment type="subunit">
    <text evidence="3 5">Homohexamer. Trimer of dimers.</text>
</comment>
<comment type="disruption phenotype">
    <text evidence="2">Cells lacking this gene are shown to be highly attenuated in a mouse tuberculosis model.</text>
</comment>
<comment type="similarity">
    <text evidence="8">Belongs to the FcoT family.</text>
</comment>
<accession>P9WM67</accession>
<accession>L0T4B3</accession>
<accession>P64685</accession>
<accession>Q10894</accession>
<evidence type="ECO:0000250" key="1">
    <source>
        <dbReference type="UniProtKB" id="B2HKM2"/>
    </source>
</evidence>
<evidence type="ECO:0000269" key="2">
    <source>
    </source>
</evidence>
<evidence type="ECO:0000269" key="3">
    <source>
    </source>
</evidence>
<evidence type="ECO:0000269" key="4">
    <source>
    </source>
</evidence>
<evidence type="ECO:0000269" key="5">
    <source>
    </source>
</evidence>
<evidence type="ECO:0000269" key="6">
    <source>
    </source>
</evidence>
<evidence type="ECO:0000303" key="7">
    <source>
    </source>
</evidence>
<evidence type="ECO:0000305" key="8"/>
<evidence type="ECO:0000305" key="9">
    <source>
    </source>
</evidence>
<evidence type="ECO:0007744" key="10">
    <source>
        <dbReference type="PDB" id="2PFC"/>
    </source>
</evidence>
<evidence type="ECO:0007744" key="11">
    <source>
        <dbReference type="PDB" id="3B18"/>
    </source>
</evidence>
<evidence type="ECO:0007829" key="12">
    <source>
        <dbReference type="PDB" id="2PFC"/>
    </source>
</evidence>
<evidence type="ECO:0007829" key="13">
    <source>
        <dbReference type="PDB" id="3B18"/>
    </source>
</evidence>
<dbReference type="EC" id="4.3.2.11" evidence="1"/>
<dbReference type="EC" id="3.1.2.-" evidence="3"/>
<dbReference type="EC" id="3.1.2.2" evidence="3"/>
<dbReference type="EMBL" id="AL123456">
    <property type="protein sequence ID" value="CCP42823.1"/>
    <property type="molecule type" value="Genomic_DNA"/>
</dbReference>
<dbReference type="PIR" id="B70751">
    <property type="entry name" value="B70751"/>
</dbReference>
<dbReference type="RefSeq" id="NP_214612.1">
    <property type="nucleotide sequence ID" value="NC_000962.3"/>
</dbReference>
<dbReference type="RefSeq" id="WP_003899810.1">
    <property type="nucleotide sequence ID" value="NZ_NVQJ01000053.1"/>
</dbReference>
<dbReference type="PDB" id="2PFC">
    <property type="method" value="X-ray"/>
    <property type="resolution" value="2.30 A"/>
    <property type="chains" value="A=1-183"/>
</dbReference>
<dbReference type="PDB" id="3B18">
    <property type="method" value="X-ray"/>
    <property type="resolution" value="2.75 A"/>
    <property type="chains" value="A=1-183"/>
</dbReference>
<dbReference type="PDBsum" id="2PFC"/>
<dbReference type="PDBsum" id="3B18"/>
<dbReference type="SMR" id="P9WM67"/>
<dbReference type="STRING" id="83332.Rv0098"/>
<dbReference type="SwissLipids" id="SLP:000001037"/>
<dbReference type="PaxDb" id="83332-Rv0098"/>
<dbReference type="DNASU" id="886935"/>
<dbReference type="GeneID" id="886935"/>
<dbReference type="KEGG" id="mtu:Rv0098"/>
<dbReference type="KEGG" id="mtv:RVBD_0098"/>
<dbReference type="TubercuList" id="Rv0098"/>
<dbReference type="eggNOG" id="ENOG5032SAE">
    <property type="taxonomic scope" value="Bacteria"/>
</dbReference>
<dbReference type="InParanoid" id="P9WM67"/>
<dbReference type="OrthoDB" id="510402at2"/>
<dbReference type="BRENDA" id="3.1.2.2">
    <property type="organism ID" value="3445"/>
</dbReference>
<dbReference type="BRENDA" id="3.1.2.20">
    <property type="organism ID" value="3445"/>
</dbReference>
<dbReference type="EvolutionaryTrace" id="P9WM67"/>
<dbReference type="Proteomes" id="UP000001584">
    <property type="component" value="Chromosome"/>
</dbReference>
<dbReference type="GO" id="GO:0005886">
    <property type="term" value="C:plasma membrane"/>
    <property type="evidence" value="ECO:0007005"/>
    <property type="project" value="MTBBASE"/>
</dbReference>
<dbReference type="GO" id="GO:0047617">
    <property type="term" value="F:fatty acyl-CoA hydrolase activity"/>
    <property type="evidence" value="ECO:0000314"/>
    <property type="project" value="MTBBASE"/>
</dbReference>
<dbReference type="GO" id="GO:0016829">
    <property type="term" value="F:lyase activity"/>
    <property type="evidence" value="ECO:0007669"/>
    <property type="project" value="UniProtKB-KW"/>
</dbReference>
<dbReference type="GO" id="GO:0006633">
    <property type="term" value="P:fatty acid biosynthetic process"/>
    <property type="evidence" value="ECO:0000315"/>
    <property type="project" value="MTBBASE"/>
</dbReference>
<dbReference type="Gene3D" id="3.10.129.30">
    <property type="entry name" value="Rv0098, thioesterase-like hot dog domain"/>
    <property type="match status" value="1"/>
</dbReference>
<dbReference type="InterPro" id="IPR022598">
    <property type="entry name" value="FcoT_ThioEstase"/>
</dbReference>
<dbReference type="InterPro" id="IPR043064">
    <property type="entry name" value="FcoT_ThioEstase_Rv0098-like_sf"/>
</dbReference>
<dbReference type="Pfam" id="PF10862">
    <property type="entry name" value="FcoT"/>
    <property type="match status" value="1"/>
</dbReference>